<keyword id="KW-1185">Reference proteome</keyword>
<keyword id="KW-0687">Ribonucleoprotein</keyword>
<keyword id="KW-0689">Ribosomal protein</keyword>
<proteinExistence type="evidence at transcript level"/>
<sequence>MPAKQRTPKVNRNPDLIRGVGKYSRSQMYHKRGLWAIKAKNGGVFPRHDAKSKVDAPVEKPPKFYPAEDVKKPLPNRRTAKPTKLRASITPGTVLIILAGRFKGKRVVFLKQLASGLLLVTGPFKINGVPLRRVNQAYVIGTSTKVDISGVTLDKFDDKYFGKVAEKKKKKTEGEFFEAEKEEKKEIPQVKKDDQKAVDAALIKAIEAVPELKTYLGARFSLKQGMKPHELVF</sequence>
<comment type="similarity">
    <text evidence="3">Belongs to the eukaryotic ribosomal protein eL6 family.</text>
</comment>
<organism>
    <name type="scientific">Arabidopsis thaliana</name>
    <name type="common">Mouse-ear cress</name>
    <dbReference type="NCBI Taxonomy" id="3702"/>
    <lineage>
        <taxon>Eukaryota</taxon>
        <taxon>Viridiplantae</taxon>
        <taxon>Streptophyta</taxon>
        <taxon>Embryophyta</taxon>
        <taxon>Tracheophyta</taxon>
        <taxon>Spermatophyta</taxon>
        <taxon>Magnoliopsida</taxon>
        <taxon>eudicotyledons</taxon>
        <taxon>Gunneridae</taxon>
        <taxon>Pentapetalae</taxon>
        <taxon>rosids</taxon>
        <taxon>malvids</taxon>
        <taxon>Brassicales</taxon>
        <taxon>Brassicaceae</taxon>
        <taxon>Camelineae</taxon>
        <taxon>Arabidopsis</taxon>
    </lineage>
</organism>
<gene>
    <name type="primary">RPL6C</name>
    <name type="ordered locus">At1g74050</name>
    <name type="ORF">F2P9.8</name>
</gene>
<feature type="chain" id="PRO_0000239923" description="Large ribosomal subunit protein eL6x">
    <location>
        <begin position="1"/>
        <end position="233"/>
    </location>
</feature>
<feature type="region of interest" description="Disordered" evidence="1">
    <location>
        <begin position="48"/>
        <end position="80"/>
    </location>
</feature>
<feature type="compositionally biased region" description="Basic and acidic residues" evidence="1">
    <location>
        <begin position="48"/>
        <end position="72"/>
    </location>
</feature>
<dbReference type="EMBL" id="AC016662">
    <property type="protein sequence ID" value="AAG52527.1"/>
    <property type="molecule type" value="Genomic_DNA"/>
</dbReference>
<dbReference type="EMBL" id="CP002684">
    <property type="protein sequence ID" value="AEE35542.1"/>
    <property type="molecule type" value="Genomic_DNA"/>
</dbReference>
<dbReference type="EMBL" id="AY054573">
    <property type="protein sequence ID" value="AAK96764.1"/>
    <property type="molecule type" value="mRNA"/>
</dbReference>
<dbReference type="EMBL" id="AY081305">
    <property type="protein sequence ID" value="AAL91194.1"/>
    <property type="molecule type" value="mRNA"/>
</dbReference>
<dbReference type="EMBL" id="AY114641">
    <property type="protein sequence ID" value="AAM47960.1"/>
    <property type="molecule type" value="mRNA"/>
</dbReference>
<dbReference type="EMBL" id="AY087325">
    <property type="protein sequence ID" value="AAM64875.1"/>
    <property type="molecule type" value="mRNA"/>
</dbReference>
<dbReference type="PIR" id="D96768">
    <property type="entry name" value="D96768"/>
</dbReference>
<dbReference type="RefSeq" id="NP_177545.1">
    <property type="nucleotide sequence ID" value="NM_106064.4"/>
</dbReference>
<dbReference type="SMR" id="Q9C9C5"/>
<dbReference type="BioGRID" id="28963">
    <property type="interactions" value="157"/>
</dbReference>
<dbReference type="FunCoup" id="Q9C9C5">
    <property type="interactions" value="4258"/>
</dbReference>
<dbReference type="IntAct" id="Q9C9C5">
    <property type="interactions" value="1"/>
</dbReference>
<dbReference type="STRING" id="3702.Q9C9C5"/>
<dbReference type="GlyGen" id="Q9C9C5">
    <property type="glycosylation" value="1 site"/>
</dbReference>
<dbReference type="iPTMnet" id="Q9C9C5"/>
<dbReference type="PaxDb" id="3702-AT1G74050.1"/>
<dbReference type="EnsemblPlants" id="AT1G74050.1">
    <property type="protein sequence ID" value="AT1G74050.1"/>
    <property type="gene ID" value="AT1G74050"/>
</dbReference>
<dbReference type="GeneID" id="843744"/>
<dbReference type="Gramene" id="AT1G74050.1">
    <property type="protein sequence ID" value="AT1G74050.1"/>
    <property type="gene ID" value="AT1G74050"/>
</dbReference>
<dbReference type="KEGG" id="ath:AT1G74050"/>
<dbReference type="Araport" id="AT1G74050"/>
<dbReference type="TAIR" id="AT1G74050"/>
<dbReference type="eggNOG" id="KOG1694">
    <property type="taxonomic scope" value="Eukaryota"/>
</dbReference>
<dbReference type="HOGENOM" id="CLU_066767_1_0_1"/>
<dbReference type="InParanoid" id="Q9C9C5"/>
<dbReference type="OMA" id="KWYNADD"/>
<dbReference type="OrthoDB" id="2436667at2759"/>
<dbReference type="PhylomeDB" id="Q9C9C5"/>
<dbReference type="CD-CODE" id="4299E36E">
    <property type="entry name" value="Nucleolus"/>
</dbReference>
<dbReference type="PRO" id="PR:Q9C9C5"/>
<dbReference type="Proteomes" id="UP000006548">
    <property type="component" value="Chromosome 1"/>
</dbReference>
<dbReference type="ExpressionAtlas" id="Q9C9C5">
    <property type="expression patterns" value="baseline and differential"/>
</dbReference>
<dbReference type="GO" id="GO:0022625">
    <property type="term" value="C:cytosolic large ribosomal subunit"/>
    <property type="evidence" value="ECO:0007005"/>
    <property type="project" value="TAIR"/>
</dbReference>
<dbReference type="GO" id="GO:0005739">
    <property type="term" value="C:mitochondrion"/>
    <property type="evidence" value="ECO:0007005"/>
    <property type="project" value="TAIR"/>
</dbReference>
<dbReference type="GO" id="GO:0009506">
    <property type="term" value="C:plasmodesma"/>
    <property type="evidence" value="ECO:0007005"/>
    <property type="project" value="TAIR"/>
</dbReference>
<dbReference type="GO" id="GO:0003729">
    <property type="term" value="F:mRNA binding"/>
    <property type="evidence" value="ECO:0000314"/>
    <property type="project" value="TAIR"/>
</dbReference>
<dbReference type="GO" id="GO:0003735">
    <property type="term" value="F:structural constituent of ribosome"/>
    <property type="evidence" value="ECO:0000314"/>
    <property type="project" value="CAFA"/>
</dbReference>
<dbReference type="GO" id="GO:0006412">
    <property type="term" value="P:translation"/>
    <property type="evidence" value="ECO:0007669"/>
    <property type="project" value="InterPro"/>
</dbReference>
<dbReference type="CDD" id="cd13156">
    <property type="entry name" value="KOW_RPL6"/>
    <property type="match status" value="1"/>
</dbReference>
<dbReference type="FunFam" id="2.30.30.30:FF:000014">
    <property type="entry name" value="60S ribosomal protein L6"/>
    <property type="match status" value="1"/>
</dbReference>
<dbReference type="Gene3D" id="2.30.30.30">
    <property type="match status" value="1"/>
</dbReference>
<dbReference type="InterPro" id="IPR000915">
    <property type="entry name" value="60S_ribosomal_eL6"/>
</dbReference>
<dbReference type="InterPro" id="IPR014722">
    <property type="entry name" value="Rib_uL2_dom2"/>
</dbReference>
<dbReference type="InterPro" id="IPR041997">
    <property type="entry name" value="Ribosomal_eL6_KOW"/>
</dbReference>
<dbReference type="InterPro" id="IPR005568">
    <property type="entry name" value="Ribosomal_uL6_N"/>
</dbReference>
<dbReference type="InterPro" id="IPR008991">
    <property type="entry name" value="Translation_prot_SH3-like_sf"/>
</dbReference>
<dbReference type="PANTHER" id="PTHR10715">
    <property type="entry name" value="60S RIBOSOMAL PROTEIN L6"/>
    <property type="match status" value="1"/>
</dbReference>
<dbReference type="PANTHER" id="PTHR10715:SF10">
    <property type="entry name" value="LARGE RIBOSOMAL SUBUNIT PROTEIN EL6X-RELATED"/>
    <property type="match status" value="1"/>
</dbReference>
<dbReference type="Pfam" id="PF01159">
    <property type="entry name" value="Ribosomal_L6e"/>
    <property type="match status" value="1"/>
</dbReference>
<dbReference type="Pfam" id="PF03868">
    <property type="entry name" value="Ribosomal_L6e_N"/>
    <property type="match status" value="1"/>
</dbReference>
<dbReference type="SUPFAM" id="SSF50104">
    <property type="entry name" value="Translation proteins SH3-like domain"/>
    <property type="match status" value="1"/>
</dbReference>
<evidence type="ECO:0000256" key="1">
    <source>
        <dbReference type="SAM" id="MobiDB-lite"/>
    </source>
</evidence>
<evidence type="ECO:0000303" key="2">
    <source>
    </source>
</evidence>
<evidence type="ECO:0000305" key="3"/>
<protein>
    <recommendedName>
        <fullName evidence="2">Large ribosomal subunit protein eL6x</fullName>
    </recommendedName>
    <alternativeName>
        <fullName>60S ribosomal protein L6-3</fullName>
    </alternativeName>
</protein>
<name>RL63_ARATH</name>
<accession>Q9C9C5</accession>
<reference key="1">
    <citation type="journal article" date="2000" name="Nature">
        <title>Sequence and analysis of chromosome 1 of the plant Arabidopsis thaliana.</title>
        <authorList>
            <person name="Theologis A."/>
            <person name="Ecker J.R."/>
            <person name="Palm C.J."/>
            <person name="Federspiel N.A."/>
            <person name="Kaul S."/>
            <person name="White O."/>
            <person name="Alonso J."/>
            <person name="Altafi H."/>
            <person name="Araujo R."/>
            <person name="Bowman C.L."/>
            <person name="Brooks S.Y."/>
            <person name="Buehler E."/>
            <person name="Chan A."/>
            <person name="Chao Q."/>
            <person name="Chen H."/>
            <person name="Cheuk R.F."/>
            <person name="Chin C.W."/>
            <person name="Chung M.K."/>
            <person name="Conn L."/>
            <person name="Conway A.B."/>
            <person name="Conway A.R."/>
            <person name="Creasy T.H."/>
            <person name="Dewar K."/>
            <person name="Dunn P."/>
            <person name="Etgu P."/>
            <person name="Feldblyum T.V."/>
            <person name="Feng J.-D."/>
            <person name="Fong B."/>
            <person name="Fujii C.Y."/>
            <person name="Gill J.E."/>
            <person name="Goldsmith A.D."/>
            <person name="Haas B."/>
            <person name="Hansen N.F."/>
            <person name="Hughes B."/>
            <person name="Huizar L."/>
            <person name="Hunter J.L."/>
            <person name="Jenkins J."/>
            <person name="Johnson-Hopson C."/>
            <person name="Khan S."/>
            <person name="Khaykin E."/>
            <person name="Kim C.J."/>
            <person name="Koo H.L."/>
            <person name="Kremenetskaia I."/>
            <person name="Kurtz D.B."/>
            <person name="Kwan A."/>
            <person name="Lam B."/>
            <person name="Langin-Hooper S."/>
            <person name="Lee A."/>
            <person name="Lee J.M."/>
            <person name="Lenz C.A."/>
            <person name="Li J.H."/>
            <person name="Li Y.-P."/>
            <person name="Lin X."/>
            <person name="Liu S.X."/>
            <person name="Liu Z.A."/>
            <person name="Luros J.S."/>
            <person name="Maiti R."/>
            <person name="Marziali A."/>
            <person name="Militscher J."/>
            <person name="Miranda M."/>
            <person name="Nguyen M."/>
            <person name="Nierman W.C."/>
            <person name="Osborne B.I."/>
            <person name="Pai G."/>
            <person name="Peterson J."/>
            <person name="Pham P.K."/>
            <person name="Rizzo M."/>
            <person name="Rooney T."/>
            <person name="Rowley D."/>
            <person name="Sakano H."/>
            <person name="Salzberg S.L."/>
            <person name="Schwartz J.R."/>
            <person name="Shinn P."/>
            <person name="Southwick A.M."/>
            <person name="Sun H."/>
            <person name="Tallon L.J."/>
            <person name="Tambunga G."/>
            <person name="Toriumi M.J."/>
            <person name="Town C.D."/>
            <person name="Utterback T."/>
            <person name="Van Aken S."/>
            <person name="Vaysberg M."/>
            <person name="Vysotskaia V.S."/>
            <person name="Walker M."/>
            <person name="Wu D."/>
            <person name="Yu G."/>
            <person name="Fraser C.M."/>
            <person name="Venter J.C."/>
            <person name="Davis R.W."/>
        </authorList>
    </citation>
    <scope>NUCLEOTIDE SEQUENCE [LARGE SCALE GENOMIC DNA]</scope>
    <source>
        <strain>cv. Columbia</strain>
    </source>
</reference>
<reference key="2">
    <citation type="journal article" date="2017" name="Plant J.">
        <title>Araport11: a complete reannotation of the Arabidopsis thaliana reference genome.</title>
        <authorList>
            <person name="Cheng C.Y."/>
            <person name="Krishnakumar V."/>
            <person name="Chan A.P."/>
            <person name="Thibaud-Nissen F."/>
            <person name="Schobel S."/>
            <person name="Town C.D."/>
        </authorList>
    </citation>
    <scope>GENOME REANNOTATION</scope>
    <source>
        <strain>cv. Columbia</strain>
    </source>
</reference>
<reference key="3">
    <citation type="journal article" date="2003" name="Science">
        <title>Empirical analysis of transcriptional activity in the Arabidopsis genome.</title>
        <authorList>
            <person name="Yamada K."/>
            <person name="Lim J."/>
            <person name="Dale J.M."/>
            <person name="Chen H."/>
            <person name="Shinn P."/>
            <person name="Palm C.J."/>
            <person name="Southwick A.M."/>
            <person name="Wu H.C."/>
            <person name="Kim C.J."/>
            <person name="Nguyen M."/>
            <person name="Pham P.K."/>
            <person name="Cheuk R.F."/>
            <person name="Karlin-Newmann G."/>
            <person name="Liu S.X."/>
            <person name="Lam B."/>
            <person name="Sakano H."/>
            <person name="Wu T."/>
            <person name="Yu G."/>
            <person name="Miranda M."/>
            <person name="Quach H.L."/>
            <person name="Tripp M."/>
            <person name="Chang C.H."/>
            <person name="Lee J.M."/>
            <person name="Toriumi M.J."/>
            <person name="Chan M.M."/>
            <person name="Tang C.C."/>
            <person name="Onodera C.S."/>
            <person name="Deng J.M."/>
            <person name="Akiyama K."/>
            <person name="Ansari Y."/>
            <person name="Arakawa T."/>
            <person name="Banh J."/>
            <person name="Banno F."/>
            <person name="Bowser L."/>
            <person name="Brooks S.Y."/>
            <person name="Carninci P."/>
            <person name="Chao Q."/>
            <person name="Choy N."/>
            <person name="Enju A."/>
            <person name="Goldsmith A.D."/>
            <person name="Gurjal M."/>
            <person name="Hansen N.F."/>
            <person name="Hayashizaki Y."/>
            <person name="Johnson-Hopson C."/>
            <person name="Hsuan V.W."/>
            <person name="Iida K."/>
            <person name="Karnes M."/>
            <person name="Khan S."/>
            <person name="Koesema E."/>
            <person name="Ishida J."/>
            <person name="Jiang P.X."/>
            <person name="Jones T."/>
            <person name="Kawai J."/>
            <person name="Kamiya A."/>
            <person name="Meyers C."/>
            <person name="Nakajima M."/>
            <person name="Narusaka M."/>
            <person name="Seki M."/>
            <person name="Sakurai T."/>
            <person name="Satou M."/>
            <person name="Tamse R."/>
            <person name="Vaysberg M."/>
            <person name="Wallender E.K."/>
            <person name="Wong C."/>
            <person name="Yamamura Y."/>
            <person name="Yuan S."/>
            <person name="Shinozaki K."/>
            <person name="Davis R.W."/>
            <person name="Theologis A."/>
            <person name="Ecker J.R."/>
        </authorList>
    </citation>
    <scope>NUCLEOTIDE SEQUENCE [LARGE SCALE MRNA]</scope>
    <source>
        <strain>cv. Columbia</strain>
    </source>
</reference>
<reference key="4">
    <citation type="submission" date="2002-03" db="EMBL/GenBank/DDBJ databases">
        <title>Full-length cDNA from Arabidopsis thaliana.</title>
        <authorList>
            <person name="Brover V.V."/>
            <person name="Troukhan M.E."/>
            <person name="Alexandrov N.A."/>
            <person name="Lu Y.-P."/>
            <person name="Flavell R.B."/>
            <person name="Feldmann K.A."/>
        </authorList>
    </citation>
    <scope>NUCLEOTIDE SEQUENCE [LARGE SCALE MRNA]</scope>
</reference>
<reference key="5">
    <citation type="journal article" date="2001" name="Plant Physiol.">
        <title>The organization of cytoplasmic ribosomal protein genes in the Arabidopsis genome.</title>
        <authorList>
            <person name="Barakat A."/>
            <person name="Szick-Miranda K."/>
            <person name="Chang I.-F."/>
            <person name="Guyot R."/>
            <person name="Blanc G."/>
            <person name="Cooke R."/>
            <person name="Delseny M."/>
            <person name="Bailey-Serres J."/>
        </authorList>
    </citation>
    <scope>GENE FAMILY ORGANIZATION</scope>
    <scope>NOMENCLATURE</scope>
</reference>
<reference key="6">
    <citation type="journal article" date="2023" name="Plant Cell">
        <title>An updated nomenclature for plant ribosomal protein genes.</title>
        <authorList>
            <person name="Scarpin M.R."/>
            <person name="Busche M."/>
            <person name="Martinez R.E."/>
            <person name="Harper L.C."/>
            <person name="Reiser L."/>
            <person name="Szakonyi D."/>
            <person name="Merchante C."/>
            <person name="Lan T."/>
            <person name="Xiong W."/>
            <person name="Mo B."/>
            <person name="Tang G."/>
            <person name="Chen X."/>
            <person name="Bailey-Serres J."/>
            <person name="Browning K.S."/>
            <person name="Brunkard J.O."/>
        </authorList>
    </citation>
    <scope>NOMENCLATURE</scope>
</reference>